<feature type="chain" id="PRO_1000120245" description="GMP synthase [glutamine-hydrolyzing]">
    <location>
        <begin position="1"/>
        <end position="510"/>
    </location>
</feature>
<feature type="domain" description="Glutamine amidotransferase type-1" evidence="1">
    <location>
        <begin position="5"/>
        <end position="194"/>
    </location>
</feature>
<feature type="domain" description="GMPS ATP-PPase" evidence="1">
    <location>
        <begin position="195"/>
        <end position="385"/>
    </location>
</feature>
<feature type="active site" description="Nucleophile" evidence="1">
    <location>
        <position position="82"/>
    </location>
</feature>
<feature type="active site" evidence="1">
    <location>
        <position position="169"/>
    </location>
</feature>
<feature type="active site" evidence="1">
    <location>
        <position position="171"/>
    </location>
</feature>
<feature type="binding site" evidence="1">
    <location>
        <begin position="222"/>
        <end position="228"/>
    </location>
    <ligand>
        <name>ATP</name>
        <dbReference type="ChEBI" id="CHEBI:30616"/>
    </ligand>
</feature>
<protein>
    <recommendedName>
        <fullName evidence="1">GMP synthase [glutamine-hydrolyzing]</fullName>
        <ecNumber evidence="1">6.3.5.2</ecNumber>
    </recommendedName>
    <alternativeName>
        <fullName evidence="1">GMP synthetase</fullName>
    </alternativeName>
    <alternativeName>
        <fullName evidence="1">Glutamine amidotransferase</fullName>
    </alternativeName>
</protein>
<dbReference type="EC" id="6.3.5.2" evidence="1"/>
<dbReference type="EMBL" id="CP000487">
    <property type="protein sequence ID" value="ABK82352.1"/>
    <property type="molecule type" value="Genomic_DNA"/>
</dbReference>
<dbReference type="RefSeq" id="WP_011732140.1">
    <property type="nucleotide sequence ID" value="NC_008599.1"/>
</dbReference>
<dbReference type="SMR" id="A0RQD7"/>
<dbReference type="GeneID" id="61065089"/>
<dbReference type="KEGG" id="cff:CFF8240_1264"/>
<dbReference type="PATRIC" id="fig|360106.6.peg.1237"/>
<dbReference type="eggNOG" id="COG0519">
    <property type="taxonomic scope" value="Bacteria"/>
</dbReference>
<dbReference type="HOGENOM" id="CLU_014340_0_5_7"/>
<dbReference type="UniPathway" id="UPA00189">
    <property type="reaction ID" value="UER00296"/>
</dbReference>
<dbReference type="Proteomes" id="UP000000760">
    <property type="component" value="Chromosome"/>
</dbReference>
<dbReference type="GO" id="GO:0005829">
    <property type="term" value="C:cytosol"/>
    <property type="evidence" value="ECO:0007669"/>
    <property type="project" value="TreeGrafter"/>
</dbReference>
<dbReference type="GO" id="GO:0005524">
    <property type="term" value="F:ATP binding"/>
    <property type="evidence" value="ECO:0007669"/>
    <property type="project" value="UniProtKB-UniRule"/>
</dbReference>
<dbReference type="GO" id="GO:0003921">
    <property type="term" value="F:GMP synthase activity"/>
    <property type="evidence" value="ECO:0007669"/>
    <property type="project" value="InterPro"/>
</dbReference>
<dbReference type="CDD" id="cd01742">
    <property type="entry name" value="GATase1_GMP_Synthase"/>
    <property type="match status" value="1"/>
</dbReference>
<dbReference type="CDD" id="cd01997">
    <property type="entry name" value="GMP_synthase_C"/>
    <property type="match status" value="1"/>
</dbReference>
<dbReference type="FunFam" id="3.30.300.10:FF:000002">
    <property type="entry name" value="GMP synthase [glutamine-hydrolyzing]"/>
    <property type="match status" value="1"/>
</dbReference>
<dbReference type="FunFam" id="3.40.50.620:FF:000001">
    <property type="entry name" value="GMP synthase [glutamine-hydrolyzing]"/>
    <property type="match status" value="1"/>
</dbReference>
<dbReference type="FunFam" id="3.40.50.880:FF:000001">
    <property type="entry name" value="GMP synthase [glutamine-hydrolyzing]"/>
    <property type="match status" value="1"/>
</dbReference>
<dbReference type="Gene3D" id="3.30.300.10">
    <property type="match status" value="1"/>
</dbReference>
<dbReference type="Gene3D" id="3.40.50.880">
    <property type="match status" value="1"/>
</dbReference>
<dbReference type="Gene3D" id="3.40.50.620">
    <property type="entry name" value="HUPs"/>
    <property type="match status" value="1"/>
</dbReference>
<dbReference type="HAMAP" id="MF_00344">
    <property type="entry name" value="GMP_synthase"/>
    <property type="match status" value="1"/>
</dbReference>
<dbReference type="InterPro" id="IPR029062">
    <property type="entry name" value="Class_I_gatase-like"/>
</dbReference>
<dbReference type="InterPro" id="IPR017926">
    <property type="entry name" value="GATASE"/>
</dbReference>
<dbReference type="InterPro" id="IPR001674">
    <property type="entry name" value="GMP_synth_C"/>
</dbReference>
<dbReference type="InterPro" id="IPR004739">
    <property type="entry name" value="GMP_synth_GATase"/>
</dbReference>
<dbReference type="InterPro" id="IPR022955">
    <property type="entry name" value="GMP_synthase"/>
</dbReference>
<dbReference type="InterPro" id="IPR025777">
    <property type="entry name" value="GMPS_ATP_PPase_dom"/>
</dbReference>
<dbReference type="InterPro" id="IPR022310">
    <property type="entry name" value="NAD/GMP_synthase"/>
</dbReference>
<dbReference type="InterPro" id="IPR014729">
    <property type="entry name" value="Rossmann-like_a/b/a_fold"/>
</dbReference>
<dbReference type="NCBIfam" id="TIGR00884">
    <property type="entry name" value="guaA_Cterm"/>
    <property type="match status" value="1"/>
</dbReference>
<dbReference type="NCBIfam" id="TIGR00888">
    <property type="entry name" value="guaA_Nterm"/>
    <property type="match status" value="1"/>
</dbReference>
<dbReference type="NCBIfam" id="NF000848">
    <property type="entry name" value="PRK00074.1"/>
    <property type="match status" value="1"/>
</dbReference>
<dbReference type="PANTHER" id="PTHR11922:SF2">
    <property type="entry name" value="GMP SYNTHASE [GLUTAMINE-HYDROLYZING]"/>
    <property type="match status" value="1"/>
</dbReference>
<dbReference type="PANTHER" id="PTHR11922">
    <property type="entry name" value="GMP SYNTHASE-RELATED"/>
    <property type="match status" value="1"/>
</dbReference>
<dbReference type="Pfam" id="PF00117">
    <property type="entry name" value="GATase"/>
    <property type="match status" value="1"/>
</dbReference>
<dbReference type="Pfam" id="PF00958">
    <property type="entry name" value="GMP_synt_C"/>
    <property type="match status" value="1"/>
</dbReference>
<dbReference type="Pfam" id="PF02540">
    <property type="entry name" value="NAD_synthase"/>
    <property type="match status" value="1"/>
</dbReference>
<dbReference type="PRINTS" id="PR00097">
    <property type="entry name" value="ANTSNTHASEII"/>
</dbReference>
<dbReference type="PRINTS" id="PR00099">
    <property type="entry name" value="CPSGATASE"/>
</dbReference>
<dbReference type="PRINTS" id="PR00096">
    <property type="entry name" value="GATASE"/>
</dbReference>
<dbReference type="SUPFAM" id="SSF52402">
    <property type="entry name" value="Adenine nucleotide alpha hydrolases-like"/>
    <property type="match status" value="1"/>
</dbReference>
<dbReference type="SUPFAM" id="SSF52317">
    <property type="entry name" value="Class I glutamine amidotransferase-like"/>
    <property type="match status" value="1"/>
</dbReference>
<dbReference type="SUPFAM" id="SSF54810">
    <property type="entry name" value="GMP synthetase C-terminal dimerisation domain"/>
    <property type="match status" value="1"/>
</dbReference>
<dbReference type="PROSITE" id="PS51273">
    <property type="entry name" value="GATASE_TYPE_1"/>
    <property type="match status" value="1"/>
</dbReference>
<dbReference type="PROSITE" id="PS51553">
    <property type="entry name" value="GMPS_ATP_PPASE"/>
    <property type="match status" value="1"/>
</dbReference>
<keyword id="KW-0067">ATP-binding</keyword>
<keyword id="KW-0315">Glutamine amidotransferase</keyword>
<keyword id="KW-0332">GMP biosynthesis</keyword>
<keyword id="KW-0436">Ligase</keyword>
<keyword id="KW-0547">Nucleotide-binding</keyword>
<keyword id="KW-0658">Purine biosynthesis</keyword>
<sequence length="510" mass="56628">MKNADILVLDFGSQYTQLIARRLREQGVYAELMPFNVSIEAIKAKNPKGIILSGGPASVYAKDAYFCDEGVFTLGLPVLGICYGMQLLAHKNGADVAPAGHKEYGKANLNIVKKCDFFKGVPDTSVVWMSHSDKVNELPQGFEVLANSENSEFCVFANLDKKLYALQFHPEVAHSEFGDTMLKNFAKICGCESTWNMGSFAKKEVQAIREKVGNDKVLCAVSGGVDSSVVAALLAHAIPDNLIVVFVDNGLLRTNEAKQVEEMFKLKLGVNLISIDASELFLSRLKGVRDPEKKRKIIGETFIEVFDKEAKKHSNVKYLAQGTLYTDVIESSVVGSSKTIKSHHNVGGLPEWMEFELIEPLREIFKDEVRRLGLELGLSRDIVYRHPFPGPGLAIRIMGEVNTSSLELLRKADVILREELKSSGWYDKTWQAFCVLLNVNSVGVMGDNRTYENAVCLRVVDASDGMTASFSRLPYDLLENCSRRIINEVDGINRVVYDISSKPPATIEWE</sequence>
<evidence type="ECO:0000255" key="1">
    <source>
        <dbReference type="HAMAP-Rule" id="MF_00344"/>
    </source>
</evidence>
<organism>
    <name type="scientific">Campylobacter fetus subsp. fetus (strain 82-40)</name>
    <dbReference type="NCBI Taxonomy" id="360106"/>
    <lineage>
        <taxon>Bacteria</taxon>
        <taxon>Pseudomonadati</taxon>
        <taxon>Campylobacterota</taxon>
        <taxon>Epsilonproteobacteria</taxon>
        <taxon>Campylobacterales</taxon>
        <taxon>Campylobacteraceae</taxon>
        <taxon>Campylobacter</taxon>
    </lineage>
</organism>
<comment type="function">
    <text evidence="1">Catalyzes the synthesis of GMP from XMP.</text>
</comment>
<comment type="catalytic activity">
    <reaction evidence="1">
        <text>XMP + L-glutamine + ATP + H2O = GMP + L-glutamate + AMP + diphosphate + 2 H(+)</text>
        <dbReference type="Rhea" id="RHEA:11680"/>
        <dbReference type="ChEBI" id="CHEBI:15377"/>
        <dbReference type="ChEBI" id="CHEBI:15378"/>
        <dbReference type="ChEBI" id="CHEBI:29985"/>
        <dbReference type="ChEBI" id="CHEBI:30616"/>
        <dbReference type="ChEBI" id="CHEBI:33019"/>
        <dbReference type="ChEBI" id="CHEBI:57464"/>
        <dbReference type="ChEBI" id="CHEBI:58115"/>
        <dbReference type="ChEBI" id="CHEBI:58359"/>
        <dbReference type="ChEBI" id="CHEBI:456215"/>
        <dbReference type="EC" id="6.3.5.2"/>
    </reaction>
</comment>
<comment type="pathway">
    <text evidence="1">Purine metabolism; GMP biosynthesis; GMP from XMP (L-Gln route): step 1/1.</text>
</comment>
<comment type="subunit">
    <text evidence="1">Homodimer.</text>
</comment>
<reference key="1">
    <citation type="submission" date="2006-11" db="EMBL/GenBank/DDBJ databases">
        <title>Sequence of Campylobacter fetus subsp. fetus 82-40.</title>
        <authorList>
            <person name="Fouts D.E."/>
            <person name="Nelson K.E."/>
        </authorList>
    </citation>
    <scope>NUCLEOTIDE SEQUENCE [LARGE SCALE GENOMIC DNA]</scope>
    <source>
        <strain>82-40</strain>
    </source>
</reference>
<gene>
    <name evidence="1" type="primary">guaA</name>
    <name type="ordered locus">CFF8240_1264</name>
</gene>
<name>GUAA_CAMFF</name>
<accession>A0RQD7</accession>
<proteinExistence type="inferred from homology"/>